<comment type="function">
    <text evidence="1">Photosystem II (PSII) is a light-driven water:plastoquinone oxidoreductase that uses light energy to abstract electrons from H(2)O, generating O(2) and a proton gradient subsequently used for ATP formation. It consists of a core antenna complex that captures photons, and an electron transfer chain that converts photonic excitation into a charge separation. The D1/D2 (PsbA/PsbD) reaction center heterodimer binds P680, the primary electron donor of PSII as well as several subsequent electron acceptors.</text>
</comment>
<comment type="catalytic activity">
    <reaction evidence="1">
        <text>2 a plastoquinone + 4 hnu + 2 H2O = 2 a plastoquinol + O2</text>
        <dbReference type="Rhea" id="RHEA:36359"/>
        <dbReference type="Rhea" id="RHEA-COMP:9561"/>
        <dbReference type="Rhea" id="RHEA-COMP:9562"/>
        <dbReference type="ChEBI" id="CHEBI:15377"/>
        <dbReference type="ChEBI" id="CHEBI:15379"/>
        <dbReference type="ChEBI" id="CHEBI:17757"/>
        <dbReference type="ChEBI" id="CHEBI:30212"/>
        <dbReference type="ChEBI" id="CHEBI:62192"/>
        <dbReference type="EC" id="1.10.3.9"/>
    </reaction>
</comment>
<comment type="cofactor">
    <text evidence="1">The D1/D2 heterodimer binds P680, chlorophylls that are the primary electron donor of PSII, and subsequent electron acceptors. It shares a non-heme iron and each subunit binds pheophytin, quinone, additional chlorophylls, carotenoids and lipids. D1 provides most of the ligands for the Mn4-Ca-O5 cluster of the oxygen-evolving complex (OEC). There is also a Cl(-1) ion associated with D1 and D2, which is required for oxygen evolution. The PSII complex binds additional chlorophylls, carotenoids and specific lipids.</text>
</comment>
<comment type="subunit">
    <text evidence="2">PSII is composed of 1 copy each of membrane proteins PsbA, PsbB, PsbC, PsbD, PsbE, PsbF, PsbH, PsbI, PsbJ, PsbK, PsbL, PsbM, PsbT, PsbX, PsbY, Psb30/Ycf12, peripheral proteins PsbO, CyanoQ (PsbQ), PsbU, PsbV and a large number of cofactors. It forms dimeric complexes.</text>
</comment>
<comment type="subcellular location">
    <subcellularLocation>
        <location evidence="1">Cellular thylakoid membrane</location>
        <topology evidence="1">Multi-pass membrane protein</topology>
    </subcellularLocation>
</comment>
<comment type="PTM">
    <text evidence="1">Tyr-162 forms a radical intermediate that is referred to as redox-active TyrZ, YZ or Y-Z.</text>
</comment>
<comment type="PTM">
    <text evidence="1">C-terminally processed by CtpA; processing is essential to allow assembly of the oxygen-evolving complex and thus photosynthetic growth.</text>
</comment>
<comment type="miscellaneous">
    <text evidence="1">Cyanobacteria usually contain more than 2 copies of the psbA gene.</text>
</comment>
<comment type="miscellaneous">
    <text evidence="1">2 of the reaction center chlorophylls (ChlD1 and ChlD2) are entirely coordinated by water.</text>
</comment>
<comment type="miscellaneous">
    <text evidence="1">Herbicides such as atrazine, BNT, diuron or ioxynil bind in the Q(B) binding site and block subsequent electron transfer.</text>
</comment>
<comment type="similarity">
    <text evidence="1">Belongs to the reaction center PufL/M/PsbA/D family.</text>
</comment>
<reference key="1">
    <citation type="journal article" date="2007" name="PLoS Genet.">
        <title>Patterns and implications of gene gain and loss in the evolution of Prochlorococcus.</title>
        <authorList>
            <person name="Kettler G.C."/>
            <person name="Martiny A.C."/>
            <person name="Huang K."/>
            <person name="Zucker J."/>
            <person name="Coleman M.L."/>
            <person name="Rodrigue S."/>
            <person name="Chen F."/>
            <person name="Lapidus A."/>
            <person name="Ferriera S."/>
            <person name="Johnson J."/>
            <person name="Steglich C."/>
            <person name="Church G.M."/>
            <person name="Richardson P."/>
            <person name="Chisholm S.W."/>
        </authorList>
    </citation>
    <scope>NUCLEOTIDE SEQUENCE [LARGE SCALE GENOMIC DNA]</scope>
    <source>
        <strain>NATL2A</strain>
    </source>
</reference>
<name>PSBA_PROMT</name>
<dbReference type="EC" id="1.10.3.9" evidence="1"/>
<dbReference type="EMBL" id="CP000095">
    <property type="protein sequence ID" value="AAZ58049.1"/>
    <property type="molecule type" value="Genomic_DNA"/>
</dbReference>
<dbReference type="EMBL" id="CP000095">
    <property type="protein sequence ID" value="AAZ58226.1"/>
    <property type="molecule type" value="Genomic_DNA"/>
</dbReference>
<dbReference type="EMBL" id="CP000095">
    <property type="protein sequence ID" value="AAZ59080.1"/>
    <property type="molecule type" value="Genomic_DNA"/>
</dbReference>
<dbReference type="SMR" id="Q46JV2"/>
<dbReference type="STRING" id="59920.PMN2A_0558"/>
<dbReference type="KEGG" id="pmn:PMN2A_0558"/>
<dbReference type="KEGG" id="pmn:PMN2A_0735"/>
<dbReference type="KEGG" id="pmn:PMN2A_1592"/>
<dbReference type="HOGENOM" id="CLU_054206_1_0_3"/>
<dbReference type="OrthoDB" id="505356at2"/>
<dbReference type="PhylomeDB" id="Q46JV2"/>
<dbReference type="Proteomes" id="UP000002535">
    <property type="component" value="Chromosome"/>
</dbReference>
<dbReference type="GO" id="GO:0009523">
    <property type="term" value="C:photosystem II"/>
    <property type="evidence" value="ECO:0007669"/>
    <property type="project" value="UniProtKB-KW"/>
</dbReference>
<dbReference type="GO" id="GO:0031676">
    <property type="term" value="C:plasma membrane-derived thylakoid membrane"/>
    <property type="evidence" value="ECO:0007669"/>
    <property type="project" value="UniProtKB-SubCell"/>
</dbReference>
<dbReference type="GO" id="GO:0016168">
    <property type="term" value="F:chlorophyll binding"/>
    <property type="evidence" value="ECO:0007669"/>
    <property type="project" value="UniProtKB-UniRule"/>
</dbReference>
<dbReference type="GO" id="GO:0045156">
    <property type="term" value="F:electron transporter, transferring electrons within the cyclic electron transport pathway of photosynthesis activity"/>
    <property type="evidence" value="ECO:0007669"/>
    <property type="project" value="InterPro"/>
</dbReference>
<dbReference type="GO" id="GO:0005506">
    <property type="term" value="F:iron ion binding"/>
    <property type="evidence" value="ECO:0007669"/>
    <property type="project" value="UniProtKB-UniRule"/>
</dbReference>
<dbReference type="GO" id="GO:0016682">
    <property type="term" value="F:oxidoreductase activity, acting on diphenols and related substances as donors, oxygen as acceptor"/>
    <property type="evidence" value="ECO:0007669"/>
    <property type="project" value="UniProtKB-UniRule"/>
</dbReference>
<dbReference type="GO" id="GO:0010242">
    <property type="term" value="F:oxygen evolving activity"/>
    <property type="evidence" value="ECO:0007669"/>
    <property type="project" value="UniProtKB-EC"/>
</dbReference>
<dbReference type="GO" id="GO:0009772">
    <property type="term" value="P:photosynthetic electron transport in photosystem II"/>
    <property type="evidence" value="ECO:0007669"/>
    <property type="project" value="InterPro"/>
</dbReference>
<dbReference type="GO" id="GO:0009635">
    <property type="term" value="P:response to herbicide"/>
    <property type="evidence" value="ECO:0007669"/>
    <property type="project" value="UniProtKB-KW"/>
</dbReference>
<dbReference type="FunFam" id="1.20.85.10:FF:000002">
    <property type="entry name" value="Photosystem II protein D1"/>
    <property type="match status" value="1"/>
</dbReference>
<dbReference type="Gene3D" id="1.20.85.10">
    <property type="entry name" value="Photosystem II protein D1-like"/>
    <property type="match status" value="1"/>
</dbReference>
<dbReference type="HAMAP" id="MF_01379">
    <property type="entry name" value="PSII_PsbA_D1"/>
    <property type="match status" value="1"/>
</dbReference>
<dbReference type="InterPro" id="IPR055266">
    <property type="entry name" value="D1/D2"/>
</dbReference>
<dbReference type="InterPro" id="IPR036854">
    <property type="entry name" value="Photo_II_D1/D2_sf"/>
</dbReference>
<dbReference type="InterPro" id="IPR000484">
    <property type="entry name" value="Photo_RC_L/M"/>
</dbReference>
<dbReference type="InterPro" id="IPR055265">
    <property type="entry name" value="Photo_RC_L/M_CS"/>
</dbReference>
<dbReference type="InterPro" id="IPR005867">
    <property type="entry name" value="PSII_D1"/>
</dbReference>
<dbReference type="NCBIfam" id="TIGR01151">
    <property type="entry name" value="psbA"/>
    <property type="match status" value="1"/>
</dbReference>
<dbReference type="PANTHER" id="PTHR33149:SF12">
    <property type="entry name" value="PHOTOSYSTEM II D2 PROTEIN"/>
    <property type="match status" value="1"/>
</dbReference>
<dbReference type="PANTHER" id="PTHR33149">
    <property type="entry name" value="PHOTOSYSTEM II PROTEIN D1"/>
    <property type="match status" value="1"/>
</dbReference>
<dbReference type="Pfam" id="PF00124">
    <property type="entry name" value="Photo_RC"/>
    <property type="match status" value="1"/>
</dbReference>
<dbReference type="PRINTS" id="PR00256">
    <property type="entry name" value="REACTNCENTRE"/>
</dbReference>
<dbReference type="SUPFAM" id="SSF81483">
    <property type="entry name" value="Bacterial photosystem II reaction centre, L and M subunits"/>
    <property type="match status" value="1"/>
</dbReference>
<dbReference type="PROSITE" id="PS00244">
    <property type="entry name" value="REACTION_CENTER"/>
    <property type="match status" value="1"/>
</dbReference>
<gene>
    <name evidence="1 2" type="primary">psbA1</name>
    <name type="ordered locus">PMN2A_0558</name>
</gene>
<gene>
    <name evidence="1 2" type="primary">psbA2</name>
    <name type="ordered locus">PMN2A_0735</name>
</gene>
<gene>
    <name evidence="1 2" type="primary">psbA3</name>
    <name type="ordered locus">PMN2A_1592</name>
</gene>
<protein>
    <recommendedName>
        <fullName evidence="1">Photosystem II protein D1</fullName>
        <shortName evidence="1">PSII D1 protein</shortName>
        <ecNumber evidence="1">1.10.3.9</ecNumber>
    </recommendedName>
    <alternativeName>
        <fullName evidence="1">Photosystem II Q(B) protein</fullName>
    </alternativeName>
</protein>
<organism>
    <name type="scientific">Prochlorococcus marinus (strain NATL2A)</name>
    <dbReference type="NCBI Taxonomy" id="59920"/>
    <lineage>
        <taxon>Bacteria</taxon>
        <taxon>Bacillati</taxon>
        <taxon>Cyanobacteriota</taxon>
        <taxon>Cyanophyceae</taxon>
        <taxon>Synechococcales</taxon>
        <taxon>Prochlorococcaceae</taxon>
        <taxon>Prochlorococcus</taxon>
    </lineage>
</organism>
<proteinExistence type="inferred from homology"/>
<sequence length="360" mass="39638">MTTIQQQRSSLLKGWPQFCEWVTSTNNRIYVGWFGVLMIPCLLAATTCFIVAFIAAPPVDIDGIREPVAGSFMYGNNIISGAVVPSSNAIGLHFYPIWEAATLDEWLYNGGPYQLVIFHFLIGISAYMGRQWELSYRLGMRPWICVAYSAPVSAAFAVFLVYPFGQGSFSDGMPLGISGTFNFMFVFQAEHNILMHPFHMAGVAGMFGGALFSAMHGSLVTSSLIRETTGLDSQNYGYKFGQEEETYNIVAAHGYFGRLIFQYASFNNSRSLHFFLASWPVICVWLTSMGICTMAFNLNGFNFNQSVVDTSGKVVPTWGDVLNRANLGMEVMHERNAHNFPLDLAAAESTSVALVAPAIG</sequence>
<evidence type="ECO:0000255" key="1">
    <source>
        <dbReference type="HAMAP-Rule" id="MF_01379"/>
    </source>
</evidence>
<evidence type="ECO:0000305" key="2"/>
<feature type="chain" id="PRO_0000316369" description="Photosystem II protein D1" evidence="1">
    <location>
        <begin position="1"/>
        <end position="345"/>
    </location>
</feature>
<feature type="propeptide" id="PRO_0000316370" evidence="1">
    <location>
        <begin position="346"/>
        <end position="360"/>
    </location>
</feature>
<feature type="transmembrane region" description="Helical" evidence="1">
    <location>
        <begin position="30"/>
        <end position="47"/>
    </location>
</feature>
<feature type="transmembrane region" description="Helical" evidence="1">
    <location>
        <begin position="119"/>
        <end position="134"/>
    </location>
</feature>
<feature type="transmembrane region" description="Helical" evidence="1">
    <location>
        <begin position="143"/>
        <end position="157"/>
    </location>
</feature>
<feature type="transmembrane region" description="Helical" evidence="1">
    <location>
        <begin position="198"/>
        <end position="219"/>
    </location>
</feature>
<feature type="transmembrane region" description="Helical" evidence="1">
    <location>
        <begin position="275"/>
        <end position="289"/>
    </location>
</feature>
<feature type="binding site" description="axial binding residue" evidence="1">
    <location>
        <position position="119"/>
    </location>
    <ligand>
        <name>chlorophyll a</name>
        <dbReference type="ChEBI" id="CHEBI:58416"/>
        <label>ChlzD1</label>
    </ligand>
    <ligandPart>
        <name>Mg</name>
        <dbReference type="ChEBI" id="CHEBI:25107"/>
    </ligandPart>
</feature>
<feature type="binding site" evidence="1">
    <location>
        <position position="127"/>
    </location>
    <ligand>
        <name>pheophytin a</name>
        <dbReference type="ChEBI" id="CHEBI:136840"/>
        <label>D1</label>
    </ligand>
</feature>
<feature type="binding site" evidence="1">
    <location>
        <position position="171"/>
    </location>
    <ligand>
        <name>[CaMn4O5] cluster</name>
        <dbReference type="ChEBI" id="CHEBI:189552"/>
    </ligand>
</feature>
<feature type="binding site" evidence="1">
    <location>
        <position position="190"/>
    </location>
    <ligand>
        <name>[CaMn4O5] cluster</name>
        <dbReference type="ChEBI" id="CHEBI:189552"/>
    </ligand>
</feature>
<feature type="binding site" description="axial binding residue" evidence="1">
    <location>
        <position position="199"/>
    </location>
    <ligand>
        <name>chlorophyll a</name>
        <dbReference type="ChEBI" id="CHEBI:58416"/>
        <label>PD1</label>
    </ligand>
    <ligandPart>
        <name>Mg</name>
        <dbReference type="ChEBI" id="CHEBI:25107"/>
    </ligandPart>
</feature>
<feature type="binding site" evidence="1">
    <location>
        <position position="216"/>
    </location>
    <ligand>
        <name>a quinone</name>
        <dbReference type="ChEBI" id="CHEBI:132124"/>
        <label>B</label>
    </ligand>
</feature>
<feature type="binding site" evidence="1">
    <location>
        <position position="216"/>
    </location>
    <ligand>
        <name>Fe cation</name>
        <dbReference type="ChEBI" id="CHEBI:24875"/>
        <note>ligand shared with heterodimeric partner</note>
    </ligand>
</feature>
<feature type="binding site" evidence="1">
    <location>
        <begin position="265"/>
        <end position="266"/>
    </location>
    <ligand>
        <name>a quinone</name>
        <dbReference type="ChEBI" id="CHEBI:132124"/>
        <label>B</label>
    </ligand>
</feature>
<feature type="binding site" evidence="1">
    <location>
        <position position="273"/>
    </location>
    <ligand>
        <name>Fe cation</name>
        <dbReference type="ChEBI" id="CHEBI:24875"/>
        <note>ligand shared with heterodimeric partner</note>
    </ligand>
</feature>
<feature type="binding site" evidence="1">
    <location>
        <position position="333"/>
    </location>
    <ligand>
        <name>[CaMn4O5] cluster</name>
        <dbReference type="ChEBI" id="CHEBI:189552"/>
    </ligand>
</feature>
<feature type="binding site" evidence="1">
    <location>
        <position position="334"/>
    </location>
    <ligand>
        <name>[CaMn4O5] cluster</name>
        <dbReference type="ChEBI" id="CHEBI:189552"/>
    </ligand>
</feature>
<feature type="binding site" evidence="1">
    <location>
        <position position="343"/>
    </location>
    <ligand>
        <name>[CaMn4O5] cluster</name>
        <dbReference type="ChEBI" id="CHEBI:189552"/>
    </ligand>
</feature>
<feature type="binding site" evidence="1">
    <location>
        <position position="345"/>
    </location>
    <ligand>
        <name>[CaMn4O5] cluster</name>
        <dbReference type="ChEBI" id="CHEBI:189552"/>
    </ligand>
</feature>
<feature type="site" description="Tyrosine radical intermediate" evidence="1">
    <location>
        <position position="162"/>
    </location>
</feature>
<feature type="site" description="Stabilizes free radical intermediate" evidence="1">
    <location>
        <position position="191"/>
    </location>
</feature>
<feature type="site" description="Cleavage; by CtpA" evidence="1">
    <location>
        <begin position="345"/>
        <end position="346"/>
    </location>
</feature>
<keyword id="KW-0106">Calcium</keyword>
<keyword id="KW-0148">Chlorophyll</keyword>
<keyword id="KW-0157">Chromophore</keyword>
<keyword id="KW-0249">Electron transport</keyword>
<keyword id="KW-0359">Herbicide resistance</keyword>
<keyword id="KW-0408">Iron</keyword>
<keyword id="KW-0460">Magnesium</keyword>
<keyword id="KW-0464">Manganese</keyword>
<keyword id="KW-0472">Membrane</keyword>
<keyword id="KW-0479">Metal-binding</keyword>
<keyword id="KW-0560">Oxidoreductase</keyword>
<keyword id="KW-0602">Photosynthesis</keyword>
<keyword id="KW-0604">Photosystem II</keyword>
<keyword id="KW-1185">Reference proteome</keyword>
<keyword id="KW-0793">Thylakoid</keyword>
<keyword id="KW-0812">Transmembrane</keyword>
<keyword id="KW-1133">Transmembrane helix</keyword>
<keyword id="KW-0813">Transport</keyword>
<accession>Q46JV2</accession>